<evidence type="ECO:0000250" key="1"/>
<evidence type="ECO:0000250" key="2">
    <source>
        <dbReference type="UniProtKB" id="Q12066"/>
    </source>
</evidence>
<evidence type="ECO:0000255" key="3"/>
<evidence type="ECO:0000256" key="4">
    <source>
        <dbReference type="SAM" id="MobiDB-lite"/>
    </source>
</evidence>
<evidence type="ECO:0000305" key="5"/>
<organism>
    <name type="scientific">Saccharomyces cerevisiae (strain RM11-1a)</name>
    <name type="common">Baker's yeast</name>
    <dbReference type="NCBI Taxonomy" id="285006"/>
    <lineage>
        <taxon>Eukaryota</taxon>
        <taxon>Fungi</taxon>
        <taxon>Dikarya</taxon>
        <taxon>Ascomycota</taxon>
        <taxon>Saccharomycotina</taxon>
        <taxon>Saccharomycetes</taxon>
        <taxon>Saccharomycetales</taxon>
        <taxon>Saccharomycetaceae</taxon>
        <taxon>Saccharomyces</taxon>
    </lineage>
</organism>
<proteinExistence type="inferred from homology"/>
<protein>
    <recommendedName>
        <fullName>Nuclear rim protein 1</fullName>
    </recommendedName>
</protein>
<comment type="function">
    <text evidence="1">Member of a perinuclear network that controls recombination at multiple loci to maintain genome stability. Required for rDNA repeat stability (By similarity).</text>
</comment>
<comment type="subunit">
    <text evidence="1">Interacts with CSM1.</text>
</comment>
<comment type="subcellular location">
    <subcellularLocation>
        <location evidence="1">Nucleus membrane</location>
        <topology evidence="1">Multi-pass membrane protein</topology>
    </subcellularLocation>
</comment>
<comment type="similarity">
    <text evidence="5">Belongs to the NUR1 family.</text>
</comment>
<reference key="1">
    <citation type="submission" date="2005-03" db="EMBL/GenBank/DDBJ databases">
        <title>Annotation of the Saccharomyces cerevisiae RM11-1a genome.</title>
        <authorList>
            <consortium name="The Broad Institute Genome Sequencing Platform"/>
            <person name="Birren B.W."/>
            <person name="Lander E.S."/>
            <person name="Galagan J.E."/>
            <person name="Nusbaum C."/>
            <person name="Devon K."/>
            <person name="Cuomo C."/>
            <person name="Jaffe D.B."/>
            <person name="Butler J."/>
            <person name="Alvarez P."/>
            <person name="Gnerre S."/>
            <person name="Grabherr M."/>
            <person name="Kleber M."/>
            <person name="Mauceli E.W."/>
            <person name="Brockman W."/>
            <person name="MacCallum I.A."/>
            <person name="Rounsley S."/>
            <person name="Young S.K."/>
            <person name="LaButti K."/>
            <person name="Pushparaj V."/>
            <person name="DeCaprio D."/>
            <person name="Crawford M."/>
            <person name="Koehrsen M."/>
            <person name="Engels R."/>
            <person name="Montgomery P."/>
            <person name="Pearson M."/>
            <person name="Howarth C."/>
            <person name="Larson L."/>
            <person name="Luoma S."/>
            <person name="White J."/>
            <person name="O'Leary S."/>
            <person name="Kodira C.D."/>
            <person name="Zeng Q."/>
            <person name="Yandava C."/>
            <person name="Alvarado L."/>
            <person name="Pratt S."/>
            <person name="Kruglyak L."/>
        </authorList>
    </citation>
    <scope>NUCLEOTIDE SEQUENCE [LARGE SCALE GENOMIC DNA]</scope>
    <source>
        <strain>RM11-1a</strain>
    </source>
</reference>
<feature type="chain" id="PRO_0000409032" description="Nuclear rim protein 1">
    <location>
        <begin position="1"/>
        <end position="484"/>
    </location>
</feature>
<feature type="transmembrane region" description="Helical" evidence="3">
    <location>
        <begin position="145"/>
        <end position="165"/>
    </location>
</feature>
<feature type="transmembrane region" description="Helical" evidence="3">
    <location>
        <begin position="252"/>
        <end position="272"/>
    </location>
</feature>
<feature type="region of interest" description="Disordered" evidence="4">
    <location>
        <begin position="416"/>
        <end position="457"/>
    </location>
</feature>
<feature type="compositionally biased region" description="Polar residues" evidence="4">
    <location>
        <begin position="430"/>
        <end position="440"/>
    </location>
</feature>
<feature type="modified residue" description="Phosphoserine" evidence="2">
    <location>
        <position position="3"/>
    </location>
</feature>
<feature type="modified residue" description="Phosphoserine" evidence="2">
    <location>
        <position position="417"/>
    </location>
</feature>
<feature type="modified residue" description="Phosphoserine" evidence="2">
    <location>
        <position position="474"/>
    </location>
</feature>
<keyword id="KW-0472">Membrane</keyword>
<keyword id="KW-0539">Nucleus</keyword>
<keyword id="KW-0597">Phosphoprotein</keyword>
<keyword id="KW-0812">Transmembrane</keyword>
<keyword id="KW-1133">Transmembrane helix</keyword>
<name>NUR1_YEAS1</name>
<gene>
    <name type="primary">NUR1</name>
    <name type="ORF">SCRG_00586</name>
</gene>
<accession>B3LGY4</accession>
<dbReference type="EMBL" id="CH408043">
    <property type="protein sequence ID" value="EDV08363.1"/>
    <property type="molecule type" value="Genomic_DNA"/>
</dbReference>
<dbReference type="HOGENOM" id="CLU_033252_1_0_1"/>
<dbReference type="OrthoDB" id="13877at4893"/>
<dbReference type="Proteomes" id="UP000008335">
    <property type="component" value="Unassembled WGS sequence"/>
</dbReference>
<dbReference type="GO" id="GO:0031965">
    <property type="term" value="C:nuclear membrane"/>
    <property type="evidence" value="ECO:0007669"/>
    <property type="project" value="UniProtKB-SubCell"/>
</dbReference>
<dbReference type="GO" id="GO:0043007">
    <property type="term" value="P:maintenance of rDNA"/>
    <property type="evidence" value="ECO:0007669"/>
    <property type="project" value="TreeGrafter"/>
</dbReference>
<dbReference type="GO" id="GO:0007096">
    <property type="term" value="P:regulation of exit from mitosis"/>
    <property type="evidence" value="ECO:0007669"/>
    <property type="project" value="TreeGrafter"/>
</dbReference>
<dbReference type="InterPro" id="IPR018819">
    <property type="entry name" value="Nur1/Mug154"/>
</dbReference>
<dbReference type="PANTHER" id="PTHR28293">
    <property type="entry name" value="NUCLEAR RIM PROTEIN 1"/>
    <property type="match status" value="1"/>
</dbReference>
<dbReference type="PANTHER" id="PTHR28293:SF1">
    <property type="entry name" value="NUCLEAR RIM PROTEIN 1"/>
    <property type="match status" value="1"/>
</dbReference>
<dbReference type="Pfam" id="PF10332">
    <property type="entry name" value="DUF2418"/>
    <property type="match status" value="1"/>
</dbReference>
<sequence length="484" mass="56821">MGSNDLINEAYDDSEVVGEERESKSAWMKRWYQLLTSPLDLQLVINEKLEMINWDAYAKSLAKPLGNFLTILFFIIRLLQDNLIKPNYYKLNVKSGAFDLSKSNKLKEFDYLWEISSSFQNSNQFYAFQSWYFVTLRFLNNLFRFTIFILLSLNLYVSCKFMFGYFKTYNLFHLKKEFNSPNLTKHNLKDLSKEYYEDIYKQSLWSMLKHFFRGSRDDGPHVNQNEDEIFFQLRKWIPTNFMINLFVSFSPTAIVFLSFSDVSFTSAIAIVFHQYILDYIITKRFQRSVDDDLILSSAALQEYEDKHIMARINQCSNIDTLSSAMGTRSKTPRIFTTHSLCGEEIREVYNYEKREFEALPKMTESVPGSRETRIKDYGGISQVSDNQSHPIGFHYSPRMSPYYRDKVLDNNLAQSSSNENLEKGGAFLPNQDQNRPSKSLSPLRKTPLSARQKRFEGSEFNVLNKNDINSILRSPKKKKNYHKR</sequence>